<reference key="1">
    <citation type="journal article" date="2009" name="Genome Res.">
        <title>Comparative genomic analyses of the human fungal pathogens Coccidioides and their relatives.</title>
        <authorList>
            <person name="Sharpton T.J."/>
            <person name="Stajich J.E."/>
            <person name="Rounsley S.D."/>
            <person name="Gardner M.J."/>
            <person name="Wortman J.R."/>
            <person name="Jordar V.S."/>
            <person name="Maiti R."/>
            <person name="Kodira C.D."/>
            <person name="Neafsey D.E."/>
            <person name="Zeng Q."/>
            <person name="Hung C.-Y."/>
            <person name="McMahan C."/>
            <person name="Muszewska A."/>
            <person name="Grynberg M."/>
            <person name="Mandel M.A."/>
            <person name="Kellner E.M."/>
            <person name="Barker B.M."/>
            <person name="Galgiani J.N."/>
            <person name="Orbach M.J."/>
            <person name="Kirkland T.N."/>
            <person name="Cole G.T."/>
            <person name="Henn M.R."/>
            <person name="Birren B.W."/>
            <person name="Taylor J.W."/>
        </authorList>
    </citation>
    <scope>NUCLEOTIDE SEQUENCE [LARGE SCALE GENOMIC DNA]</scope>
    <source>
        <strain>RS</strain>
    </source>
</reference>
<reference key="2">
    <citation type="journal article" date="2010" name="Genome Res.">
        <title>Population genomic sequencing of Coccidioides fungi reveals recent hybridization and transposon control.</title>
        <authorList>
            <person name="Neafsey D.E."/>
            <person name="Barker B.M."/>
            <person name="Sharpton T.J."/>
            <person name="Stajich J.E."/>
            <person name="Park D.J."/>
            <person name="Whiston E."/>
            <person name="Hung C.-Y."/>
            <person name="McMahan C."/>
            <person name="White J."/>
            <person name="Sykes S."/>
            <person name="Heiman D."/>
            <person name="Young S."/>
            <person name="Zeng Q."/>
            <person name="Abouelleil A."/>
            <person name="Aftuck L."/>
            <person name="Bessette D."/>
            <person name="Brown A."/>
            <person name="FitzGerald M."/>
            <person name="Lui A."/>
            <person name="Macdonald J.P."/>
            <person name="Priest M."/>
            <person name="Orbach M.J."/>
            <person name="Galgiani J.N."/>
            <person name="Kirkland T.N."/>
            <person name="Cole G.T."/>
            <person name="Birren B.W."/>
            <person name="Henn M.R."/>
            <person name="Taylor J.W."/>
            <person name="Rounsley S.D."/>
        </authorList>
    </citation>
    <scope>GENOME REANNOTATION</scope>
    <source>
        <strain>RS</strain>
    </source>
</reference>
<comment type="function">
    <text evidence="1">Acts as a component of the peripheral membrane COG complex that is involved in intra-Golgi protein trafficking. COG is located at the cis-Golgi, and regulates tethering of retrograde intra-Golgi vesicles and possibly a number of other membrane trafficking events (By similarity).</text>
</comment>
<comment type="subcellular location">
    <subcellularLocation>
        <location evidence="1">Golgi apparatus membrane</location>
        <topology evidence="1">Peripheral membrane protein</topology>
    </subcellularLocation>
</comment>
<comment type="similarity">
    <text evidence="3">Belongs to the COG6 family.</text>
</comment>
<dbReference type="EMBL" id="GG704911">
    <property type="protein sequence ID" value="EAS36390.3"/>
    <property type="molecule type" value="Genomic_DNA"/>
</dbReference>
<dbReference type="RefSeq" id="XP_001247973.2">
    <property type="nucleotide sequence ID" value="XM_001247972.2"/>
</dbReference>
<dbReference type="SMR" id="Q1E6R9"/>
<dbReference type="FunCoup" id="Q1E6R9">
    <property type="interactions" value="250"/>
</dbReference>
<dbReference type="STRING" id="246410.Q1E6R9"/>
<dbReference type="GeneID" id="4566865"/>
<dbReference type="KEGG" id="cim:CIMG_01744"/>
<dbReference type="VEuPathDB" id="FungiDB:CIMG_01744"/>
<dbReference type="InParanoid" id="Q1E6R9"/>
<dbReference type="OMA" id="HSCLDFF"/>
<dbReference type="OrthoDB" id="272987at2759"/>
<dbReference type="Proteomes" id="UP000001261">
    <property type="component" value="Unassembled WGS sequence"/>
</dbReference>
<dbReference type="GO" id="GO:0000139">
    <property type="term" value="C:Golgi membrane"/>
    <property type="evidence" value="ECO:0007669"/>
    <property type="project" value="UniProtKB-SubCell"/>
</dbReference>
<dbReference type="GO" id="GO:0017119">
    <property type="term" value="C:Golgi transport complex"/>
    <property type="evidence" value="ECO:0007669"/>
    <property type="project" value="InterPro"/>
</dbReference>
<dbReference type="GO" id="GO:0006891">
    <property type="term" value="P:intra-Golgi vesicle-mediated transport"/>
    <property type="evidence" value="ECO:0007669"/>
    <property type="project" value="InterPro"/>
</dbReference>
<dbReference type="GO" id="GO:0015031">
    <property type="term" value="P:protein transport"/>
    <property type="evidence" value="ECO:0007669"/>
    <property type="project" value="UniProtKB-KW"/>
</dbReference>
<dbReference type="InterPro" id="IPR010490">
    <property type="entry name" value="COG6"/>
</dbReference>
<dbReference type="InterPro" id="IPR048369">
    <property type="entry name" value="COG6_C"/>
</dbReference>
<dbReference type="InterPro" id="IPR048368">
    <property type="entry name" value="COG6_N"/>
</dbReference>
<dbReference type="PANTHER" id="PTHR21506">
    <property type="entry name" value="COMPONENT OF OLIGOMERIC GOLGI COMPLEX 6"/>
    <property type="match status" value="1"/>
</dbReference>
<dbReference type="PANTHER" id="PTHR21506:SF0">
    <property type="entry name" value="CONSERVED OLIGOMERIC GOLGI COMPLEX SUBUNIT 6"/>
    <property type="match status" value="1"/>
</dbReference>
<dbReference type="Pfam" id="PF20653">
    <property type="entry name" value="COG6_C"/>
    <property type="match status" value="1"/>
</dbReference>
<dbReference type="Pfam" id="PF06419">
    <property type="entry name" value="COG6_N"/>
    <property type="match status" value="1"/>
</dbReference>
<dbReference type="SMART" id="SM01087">
    <property type="entry name" value="COG6"/>
    <property type="match status" value="1"/>
</dbReference>
<gene>
    <name type="primary">COG6</name>
    <name type="ORF">CIMG_01744</name>
</gene>
<proteinExistence type="inferred from homology"/>
<name>COG6_COCIM</name>
<accession>Q1E6R9</accession>
<accession>J3KK70</accession>
<sequence length="732" mass="80554">MAAGSPSPDGMPSSPHMANTGSTPKPTALFNRLNAVLSTSYTDPDIRDSLETLDKRGLQNTAETRRTLRLDIQKEVIDSNGSIIQDFGKVAEQLSRIGAAISHLNTICEDMRQHITSARQETEPVLEEAAALLSQKQEVETKQHLLDAFNKHFVLSSDDISILTSTAEPVDDRFFQILSRQKRIHKDCEVLLGGENQRLGLEIMEQSSKNLNSAFMKLYKWIQKEFKSSNLEDPQMGSSIRKGLRVLAERPTLFHSCLDFFAEAREYILSDSFHYALTAAVSGDRLDANAKPIEFSAHDPLRYVGDMLAWVHSATVSEREALEALFISDGGELVKGIEAGISSEPWSRINDEQSVFDGEKALKELVTRDMSGVARSLKQRVELAVQGHDELVTLYKIMNLLAFYESTFSKLVGHDSALVEAITSLQDFVFKRLEAVIHDQIATITGDPSGLIPPDDLSAPEFLTDAIDNLVPLMKAYDSSFRHDITDDTSQNENKFSPIIRATLDPFLDLAEKSSTALSNFTSRTIYQTNSILVIRDAISPFPFACATHLPRLSSTLTSLKTNLLDIQHDFLLRETGLQTLTAALEPFMPKSTSESSTGNGLSRNLADIASLPEFQPESLSTISQQLDDFLPSALVDATDNLKRIHSPGLVKNATEEAVEAFCCDFELVESMIVGADEAREKMSVAGTVSSSAAGKEMDEIAALGETSGQVGAWSLRVLFPRTTGEIRVLLS</sequence>
<keyword id="KW-0333">Golgi apparatus</keyword>
<keyword id="KW-0472">Membrane</keyword>
<keyword id="KW-0653">Protein transport</keyword>
<keyword id="KW-1185">Reference proteome</keyword>
<keyword id="KW-0813">Transport</keyword>
<organism>
    <name type="scientific">Coccidioides immitis (strain RS)</name>
    <name type="common">Valley fever fungus</name>
    <dbReference type="NCBI Taxonomy" id="246410"/>
    <lineage>
        <taxon>Eukaryota</taxon>
        <taxon>Fungi</taxon>
        <taxon>Dikarya</taxon>
        <taxon>Ascomycota</taxon>
        <taxon>Pezizomycotina</taxon>
        <taxon>Eurotiomycetes</taxon>
        <taxon>Eurotiomycetidae</taxon>
        <taxon>Onygenales</taxon>
        <taxon>Onygenaceae</taxon>
        <taxon>Coccidioides</taxon>
    </lineage>
</organism>
<evidence type="ECO:0000250" key="1"/>
<evidence type="ECO:0000256" key="2">
    <source>
        <dbReference type="SAM" id="MobiDB-lite"/>
    </source>
</evidence>
<evidence type="ECO:0000305" key="3"/>
<feature type="chain" id="PRO_0000339320" description="Conserved oligomeric Golgi complex subunit 6">
    <location>
        <begin position="1"/>
        <end position="732"/>
    </location>
</feature>
<feature type="region of interest" description="Disordered" evidence="2">
    <location>
        <begin position="1"/>
        <end position="27"/>
    </location>
</feature>
<feature type="compositionally biased region" description="Low complexity" evidence="2">
    <location>
        <begin position="1"/>
        <end position="15"/>
    </location>
</feature>
<feature type="compositionally biased region" description="Polar residues" evidence="2">
    <location>
        <begin position="16"/>
        <end position="25"/>
    </location>
</feature>
<protein>
    <recommendedName>
        <fullName>Conserved oligomeric Golgi complex subunit 6</fullName>
        <shortName>COG complex subunit 6</shortName>
    </recommendedName>
    <alternativeName>
        <fullName>Component of oligomeric Golgi complex 6</fullName>
    </alternativeName>
</protein>